<protein>
    <recommendedName>
        <fullName evidence="1">Eukaryotic translation initiation factor 3 subunit H</fullName>
        <shortName evidence="1">eIF3h</shortName>
    </recommendedName>
</protein>
<dbReference type="EMBL" id="DS027688">
    <property type="protein sequence ID" value="EAW22872.1"/>
    <property type="molecule type" value="Genomic_DNA"/>
</dbReference>
<dbReference type="RefSeq" id="XP_001264769.1">
    <property type="nucleotide sequence ID" value="XM_001264768.1"/>
</dbReference>
<dbReference type="SMR" id="A1D379"/>
<dbReference type="STRING" id="331117.A1D379"/>
<dbReference type="EnsemblFungi" id="EAW22872">
    <property type="protein sequence ID" value="EAW22872"/>
    <property type="gene ID" value="NFIA_015650"/>
</dbReference>
<dbReference type="GeneID" id="4591093"/>
<dbReference type="KEGG" id="nfi:NFIA_015650"/>
<dbReference type="VEuPathDB" id="FungiDB:NFIA_015650"/>
<dbReference type="eggNOG" id="KOG1560">
    <property type="taxonomic scope" value="Eukaryota"/>
</dbReference>
<dbReference type="HOGENOM" id="CLU_044094_1_0_1"/>
<dbReference type="OMA" id="WYQSTYF"/>
<dbReference type="OrthoDB" id="10265695at2759"/>
<dbReference type="Proteomes" id="UP000006702">
    <property type="component" value="Unassembled WGS sequence"/>
</dbReference>
<dbReference type="GO" id="GO:0016282">
    <property type="term" value="C:eukaryotic 43S preinitiation complex"/>
    <property type="evidence" value="ECO:0007669"/>
    <property type="project" value="UniProtKB-UniRule"/>
</dbReference>
<dbReference type="GO" id="GO:0033290">
    <property type="term" value="C:eukaryotic 48S preinitiation complex"/>
    <property type="evidence" value="ECO:0007669"/>
    <property type="project" value="UniProtKB-UniRule"/>
</dbReference>
<dbReference type="GO" id="GO:0005852">
    <property type="term" value="C:eukaryotic translation initiation factor 3 complex"/>
    <property type="evidence" value="ECO:0007669"/>
    <property type="project" value="UniProtKB-UniRule"/>
</dbReference>
<dbReference type="GO" id="GO:0008237">
    <property type="term" value="F:metallopeptidase activity"/>
    <property type="evidence" value="ECO:0007669"/>
    <property type="project" value="InterPro"/>
</dbReference>
<dbReference type="GO" id="GO:0003743">
    <property type="term" value="F:translation initiation factor activity"/>
    <property type="evidence" value="ECO:0007669"/>
    <property type="project" value="UniProtKB-UniRule"/>
</dbReference>
<dbReference type="GO" id="GO:0001732">
    <property type="term" value="P:formation of cytoplasmic translation initiation complex"/>
    <property type="evidence" value="ECO:0007669"/>
    <property type="project" value="UniProtKB-UniRule"/>
</dbReference>
<dbReference type="CDD" id="cd08065">
    <property type="entry name" value="MPN_eIF3h"/>
    <property type="match status" value="1"/>
</dbReference>
<dbReference type="FunFam" id="3.40.140.10:FF:000052">
    <property type="entry name" value="Eukaryotic translation initiation factor 3 subunit H"/>
    <property type="match status" value="1"/>
</dbReference>
<dbReference type="Gene3D" id="3.40.140.10">
    <property type="entry name" value="Cytidine Deaminase, domain 2"/>
    <property type="match status" value="1"/>
</dbReference>
<dbReference type="HAMAP" id="MF_03007">
    <property type="entry name" value="eIF3h"/>
    <property type="match status" value="1"/>
</dbReference>
<dbReference type="InterPro" id="IPR027524">
    <property type="entry name" value="eIF3h"/>
</dbReference>
<dbReference type="InterPro" id="IPR045810">
    <property type="entry name" value="eIF3h_C"/>
</dbReference>
<dbReference type="InterPro" id="IPR000555">
    <property type="entry name" value="JAMM/MPN+_dom"/>
</dbReference>
<dbReference type="InterPro" id="IPR050242">
    <property type="entry name" value="JAMM_MPN+_peptidase_M67A"/>
</dbReference>
<dbReference type="InterPro" id="IPR037518">
    <property type="entry name" value="MPN"/>
</dbReference>
<dbReference type="PANTHER" id="PTHR10410">
    <property type="entry name" value="EUKARYOTIC TRANSLATION INITIATION FACTOR 3 -RELATED"/>
    <property type="match status" value="1"/>
</dbReference>
<dbReference type="Pfam" id="PF19445">
    <property type="entry name" value="eIF3h_C"/>
    <property type="match status" value="2"/>
</dbReference>
<dbReference type="Pfam" id="PF01398">
    <property type="entry name" value="JAB"/>
    <property type="match status" value="1"/>
</dbReference>
<dbReference type="PROSITE" id="PS50249">
    <property type="entry name" value="MPN"/>
    <property type="match status" value="1"/>
</dbReference>
<accession>A1D379</accession>
<evidence type="ECO:0000255" key="1">
    <source>
        <dbReference type="HAMAP-Rule" id="MF_03007"/>
    </source>
</evidence>
<evidence type="ECO:0000255" key="2">
    <source>
        <dbReference type="PROSITE-ProRule" id="PRU01182"/>
    </source>
</evidence>
<comment type="function">
    <text evidence="1">Component of the eukaryotic translation initiation factor 3 (eIF-3) complex, which is involved in protein synthesis of a specialized repertoire of mRNAs and, together with other initiation factors, stimulates binding of mRNA and methionyl-tRNAi to the 40S ribosome. The eIF-3 complex specifically targets and initiates translation of a subset of mRNAs involved in cell proliferation.</text>
</comment>
<comment type="subunit">
    <text evidence="1">Component of the eukaryotic translation initiation factor 3 (eIF-3) complex.</text>
</comment>
<comment type="subcellular location">
    <subcellularLocation>
        <location evidence="1">Cytoplasm</location>
    </subcellularLocation>
</comment>
<comment type="similarity">
    <text evidence="1">Belongs to the eIF-3 subunit H family.</text>
</comment>
<gene>
    <name type="ORF">NFIA_015650</name>
</gene>
<keyword id="KW-0963">Cytoplasm</keyword>
<keyword id="KW-0396">Initiation factor</keyword>
<keyword id="KW-0648">Protein biosynthesis</keyword>
<keyword id="KW-1185">Reference proteome</keyword>
<name>EIF3H_NEOFI</name>
<organism>
    <name type="scientific">Neosartorya fischeri (strain ATCC 1020 / DSM 3700 / CBS 544.65 / FGSC A1164 / JCM 1740 / NRRL 181 / WB 181)</name>
    <name type="common">Aspergillus fischerianus</name>
    <dbReference type="NCBI Taxonomy" id="331117"/>
    <lineage>
        <taxon>Eukaryota</taxon>
        <taxon>Fungi</taxon>
        <taxon>Dikarya</taxon>
        <taxon>Ascomycota</taxon>
        <taxon>Pezizomycotina</taxon>
        <taxon>Eurotiomycetes</taxon>
        <taxon>Eurotiomycetidae</taxon>
        <taxon>Eurotiales</taxon>
        <taxon>Aspergillaceae</taxon>
        <taxon>Aspergillus</taxon>
        <taxon>Aspergillus subgen. Fumigati</taxon>
    </lineage>
</organism>
<sequence length="347" mass="39188">MKIMKHCSQTFPTTATGSIVGMDVGGTLEITNSFPFPVVEVPPESHFDNAAANPAAAAPRAKANTVYQAEMIRMLREVNVDANNVGWYTSANMGNFVNMNVIENQFFYQKEMNERTVALVHDVSRSSQGSLSLRAFRLSPRFMTAFKENKFTSEELQKSGLRYQDIFVELPVEIHNSHLITSFIHQLQTPNIPAPTDLPPSLAALESGPFVKSSILAPNYDNLTLSIDPFLEKNCDLLLDSIETHHTETNNFQYYQRSLAREQQRISAWQQKRKQENATRAALKQPLLPEDEWQRLFKLPQEPSRLESMLNSRQVDQYARQIDSFVSSTTGKMFAVKGNLLPGETAK</sequence>
<proteinExistence type="inferred from homology"/>
<feature type="chain" id="PRO_0000365209" description="Eukaryotic translation initiation factor 3 subunit H">
    <location>
        <begin position="1"/>
        <end position="347"/>
    </location>
</feature>
<feature type="domain" description="MPN" evidence="2">
    <location>
        <begin position="1"/>
        <end position="142"/>
    </location>
</feature>
<reference key="1">
    <citation type="journal article" date="2008" name="PLoS Genet.">
        <title>Genomic islands in the pathogenic filamentous fungus Aspergillus fumigatus.</title>
        <authorList>
            <person name="Fedorova N.D."/>
            <person name="Khaldi N."/>
            <person name="Joardar V.S."/>
            <person name="Maiti R."/>
            <person name="Amedeo P."/>
            <person name="Anderson M.J."/>
            <person name="Crabtree J."/>
            <person name="Silva J.C."/>
            <person name="Badger J.H."/>
            <person name="Albarraq A."/>
            <person name="Angiuoli S."/>
            <person name="Bussey H."/>
            <person name="Bowyer P."/>
            <person name="Cotty P.J."/>
            <person name="Dyer P.S."/>
            <person name="Egan A."/>
            <person name="Galens K."/>
            <person name="Fraser-Liggett C.M."/>
            <person name="Haas B.J."/>
            <person name="Inman J.M."/>
            <person name="Kent R."/>
            <person name="Lemieux S."/>
            <person name="Malavazi I."/>
            <person name="Orvis J."/>
            <person name="Roemer T."/>
            <person name="Ronning C.M."/>
            <person name="Sundaram J.P."/>
            <person name="Sutton G."/>
            <person name="Turner G."/>
            <person name="Venter J.C."/>
            <person name="White O.R."/>
            <person name="Whitty B.R."/>
            <person name="Youngman P."/>
            <person name="Wolfe K.H."/>
            <person name="Goldman G.H."/>
            <person name="Wortman J.R."/>
            <person name="Jiang B."/>
            <person name="Denning D.W."/>
            <person name="Nierman W.C."/>
        </authorList>
    </citation>
    <scope>NUCLEOTIDE SEQUENCE [LARGE SCALE GENOMIC DNA]</scope>
    <source>
        <strain>ATCC 1020 / DSM 3700 / CBS 544.65 / FGSC A1164 / JCM 1740 / NRRL 181 / WB 181</strain>
    </source>
</reference>